<gene>
    <name type="primary">HN</name>
</gene>
<dbReference type="EC" id="3.2.1.18" evidence="3"/>
<dbReference type="EMBL" id="M24716">
    <property type="protein sequence ID" value="AAA46666.1"/>
    <property type="molecule type" value="Genomic_RNA"/>
</dbReference>
<dbReference type="PIR" id="C36829">
    <property type="entry name" value="C36829"/>
</dbReference>
<dbReference type="SMR" id="P35740"/>
<dbReference type="CAZy" id="GH83">
    <property type="family name" value="Glycoside Hydrolase Family 83"/>
</dbReference>
<dbReference type="GlyCosmos" id="P35740">
    <property type="glycosylation" value="6 sites, No reported glycans"/>
</dbReference>
<dbReference type="GO" id="GO:0020002">
    <property type="term" value="C:host cell plasma membrane"/>
    <property type="evidence" value="ECO:0007669"/>
    <property type="project" value="UniProtKB-SubCell"/>
</dbReference>
<dbReference type="GO" id="GO:0016020">
    <property type="term" value="C:membrane"/>
    <property type="evidence" value="ECO:0007669"/>
    <property type="project" value="UniProtKB-KW"/>
</dbReference>
<dbReference type="GO" id="GO:0019031">
    <property type="term" value="C:viral envelope"/>
    <property type="evidence" value="ECO:0007669"/>
    <property type="project" value="UniProtKB-KW"/>
</dbReference>
<dbReference type="GO" id="GO:0055036">
    <property type="term" value="C:virion membrane"/>
    <property type="evidence" value="ECO:0007669"/>
    <property type="project" value="UniProtKB-SubCell"/>
</dbReference>
<dbReference type="GO" id="GO:0004308">
    <property type="term" value="F:exo-alpha-sialidase activity"/>
    <property type="evidence" value="ECO:0007669"/>
    <property type="project" value="UniProtKB-EC"/>
</dbReference>
<dbReference type="GO" id="GO:0046789">
    <property type="term" value="F:host cell surface receptor binding"/>
    <property type="evidence" value="ECO:0007669"/>
    <property type="project" value="InterPro"/>
</dbReference>
<dbReference type="GO" id="GO:0046718">
    <property type="term" value="P:symbiont entry into host cell"/>
    <property type="evidence" value="ECO:0007669"/>
    <property type="project" value="UniProtKB-KW"/>
</dbReference>
<dbReference type="GO" id="GO:0019062">
    <property type="term" value="P:virion attachment to host cell"/>
    <property type="evidence" value="ECO:0007669"/>
    <property type="project" value="UniProtKB-KW"/>
</dbReference>
<dbReference type="CDD" id="cd15469">
    <property type="entry name" value="HN"/>
    <property type="match status" value="1"/>
</dbReference>
<dbReference type="FunFam" id="2.120.10.10:FF:000004">
    <property type="entry name" value="Hemagglutinin-neuraminidase"/>
    <property type="match status" value="1"/>
</dbReference>
<dbReference type="Gene3D" id="2.120.10.10">
    <property type="match status" value="1"/>
</dbReference>
<dbReference type="InterPro" id="IPR016285">
    <property type="entry name" value="Hemagglutn-neuramid"/>
</dbReference>
<dbReference type="InterPro" id="IPR000665">
    <property type="entry name" value="Hemagglutn/HN"/>
</dbReference>
<dbReference type="InterPro" id="IPR036278">
    <property type="entry name" value="Sialidase_sf"/>
</dbReference>
<dbReference type="Pfam" id="PF00423">
    <property type="entry name" value="HN"/>
    <property type="match status" value="1"/>
</dbReference>
<dbReference type="PIRSF" id="PIRSF001072">
    <property type="entry name" value="Hemagglut-neuramid_paramyxoV"/>
    <property type="match status" value="1"/>
</dbReference>
<dbReference type="SUPFAM" id="SSF50939">
    <property type="entry name" value="Sialidases"/>
    <property type="match status" value="1"/>
</dbReference>
<feature type="chain" id="PRO_0000142608" description="Hemagglutinin-neuraminidase">
    <location>
        <begin position="1"/>
        <end position="571"/>
    </location>
</feature>
<feature type="topological domain" description="Intravirion" evidence="4">
    <location>
        <begin position="1"/>
        <end position="26"/>
    </location>
</feature>
<feature type="transmembrane region" description="Helical" evidence="4">
    <location>
        <begin position="27"/>
        <end position="47"/>
    </location>
</feature>
<feature type="topological domain" description="Virion surface" evidence="4">
    <location>
        <begin position="48"/>
        <end position="571"/>
    </location>
</feature>
<feature type="region of interest" description="Important for interaction with fusion/F protein" evidence="2">
    <location>
        <begin position="124"/>
        <end position="152"/>
    </location>
</feature>
<feature type="region of interest" description="Involved in neuraminidase activity" evidence="2">
    <location>
        <begin position="234"/>
        <end position="239"/>
    </location>
</feature>
<feature type="glycosylation site" description="N-linked (GlcNAc...) asparagine; by host" evidence="4">
    <location>
        <position position="119"/>
    </location>
</feature>
<feature type="glycosylation site" description="N-linked (GlcNAc...) asparagine; by host" evidence="2">
    <location>
        <position position="341"/>
    </location>
</feature>
<feature type="glycosylation site" description="N-linked (GlcNAc...) asparagine; by host" evidence="2">
    <location>
        <position position="433"/>
    </location>
</feature>
<feature type="glycosylation site" description="N-linked (GlcNAc...) asparagine; by host" evidence="2">
    <location>
        <position position="481"/>
    </location>
</feature>
<feature type="glycosylation site" description="N-linked (GlcNAc...) asparagine; by host" evidence="4">
    <location>
        <position position="508"/>
    </location>
</feature>
<feature type="glycosylation site" description="N-linked (GlcNAc...) asparagine; by host" evidence="4">
    <location>
        <position position="538"/>
    </location>
</feature>
<feature type="disulfide bond" evidence="3">
    <location>
        <begin position="172"/>
        <end position="196"/>
    </location>
</feature>
<feature type="disulfide bond" evidence="3">
    <location>
        <begin position="186"/>
        <end position="247"/>
    </location>
</feature>
<feature type="disulfide bond" evidence="3">
    <location>
        <begin position="238"/>
        <end position="251"/>
    </location>
</feature>
<feature type="disulfide bond" evidence="3">
    <location>
        <begin position="344"/>
        <end position="461"/>
    </location>
</feature>
<feature type="disulfide bond" evidence="3">
    <location>
        <begin position="455"/>
        <end position="465"/>
    </location>
</feature>
<feature type="disulfide bond" evidence="3">
    <location>
        <begin position="531"/>
        <end position="542"/>
    </location>
</feature>
<organismHost>
    <name type="scientific">Gallus gallus</name>
    <name type="common">Chicken</name>
    <dbReference type="NCBI Taxonomy" id="9031"/>
</organismHost>
<comment type="function">
    <text evidence="2">Mediates the viral entry into the host cell together with fusion/F protein. Attaches the virus to sialic acid-containing cell receptors and thereby initiates infection. Binding of HN protein to the receptor induces a conformational change that allows the F protein to trigger virion/cell membranes fusion.</text>
</comment>
<comment type="function">
    <text evidence="2">Neuraminidase activity ensures the efficient spread of the virus by dissociating the mature virions from the neuraminic acid containing glycoproteins.</text>
</comment>
<comment type="catalytic activity">
    <reaction evidence="2">
        <text>Hydrolysis of alpha-(2-&gt;3)-, alpha-(2-&gt;6)-, alpha-(2-&gt;8)- glycosidic linkages of terminal sialic acid residues in oligosaccharides, glycoproteins, glycolipids, colominic acid and synthetic substrates.</text>
        <dbReference type="EC" id="3.2.1.18"/>
    </reaction>
</comment>
<comment type="subunit">
    <text evidence="1 2 3">Homotetramer; composed of disulfide-linked homodimers (By similarity). Interacts with F protein trimer (By similarity). Interacts with host CG-1B; this interaction inhibits viral adsorption and replication rather than internalization (By similarity).</text>
</comment>
<comment type="subcellular location">
    <subcellularLocation>
        <location evidence="2">Virion membrane</location>
        <topology evidence="2">Single-pass type II membrane protein</topology>
    </subcellularLocation>
    <subcellularLocation>
        <location evidence="2">Host cell membrane</location>
        <topology evidence="2">Single-pass type II membrane protein</topology>
    </subcellularLocation>
</comment>
<comment type="domain">
    <text evidence="3">The C-terminus (head domain) is involved in binding the cellular receptor.</text>
</comment>
<comment type="similarity">
    <text evidence="5">Belongs to the paramyxoviruses hemagglutinin-neuraminidase family.</text>
</comment>
<sequence>MDRAVNRVVLENEEREAKNTWRLVFRIAVLLLMVMTLAISAAALVYSMGASTPRDLAGISTVISKTEDKVTSLLSSKQDVIDRIYKQVALESPLALLNTESIIMNAITSLSYQINGAANNSGCGEPVHDPDYIGGIGKELIVDDISDVTSFYPSAYQEHLNFIPAPTTGSGCTRIPSFDMSTTHYCYTHNVILSGCRDHSHSHQYLALGVLRTSATGRVFFSTLRSINLDDTQNRKSCSVSATPLGCDMLCSKVTETEEEDYKSVTPTSMVHGRLGFDGQYHEKDLDTTVLFKDWVANYPGVGGGSFIDDRVWFPVYGGLKPNSPSDTAQEGKYVIYKRYNNTCPDEQDYQIRMAKSSYKPGRFGGKRVQQAILSIKVSTSLGEDPVLTIPPNTITLMGAEGRVLTVGTSHFLYQRGSSYFSPALLYPMTVNNKTATLHSPYTFNAFTRPGSVPCQASARCPNSCITGVYTDPYPLIFHRNHTLRGVFGTMLDDEQARLNPVSAVFDNISRSRVTRVSSSSTKAAYTTSTCFKVVKTNKAYCLSIAEISNTLFGEFRIVPLLVEILKDDRV</sequence>
<keyword id="KW-1015">Disulfide bond</keyword>
<keyword id="KW-0325">Glycoprotein</keyword>
<keyword id="KW-0348">Hemagglutinin</keyword>
<keyword id="KW-1032">Host cell membrane</keyword>
<keyword id="KW-1043">Host membrane</keyword>
<keyword id="KW-0945">Host-virus interaction</keyword>
<keyword id="KW-0378">Hydrolase</keyword>
<keyword id="KW-0472">Membrane</keyword>
<keyword id="KW-0735">Signal-anchor</keyword>
<keyword id="KW-0812">Transmembrane</keyword>
<keyword id="KW-1133">Transmembrane helix</keyword>
<keyword id="KW-1161">Viral attachment to host cell</keyword>
<keyword id="KW-0261">Viral envelope protein</keyword>
<keyword id="KW-0946">Virion</keyword>
<keyword id="KW-1160">Virus entry into host cell</keyword>
<proteinExistence type="inferred from homology"/>
<accession>P35740</accession>
<evidence type="ECO:0000250" key="1">
    <source>
        <dbReference type="UniProtKB" id="P04853"/>
    </source>
</evidence>
<evidence type="ECO:0000250" key="2">
    <source>
        <dbReference type="UniProtKB" id="Q91UL0"/>
    </source>
</evidence>
<evidence type="ECO:0000250" key="3">
    <source>
        <dbReference type="UniProtKB" id="Q9WAF5"/>
    </source>
</evidence>
<evidence type="ECO:0000255" key="4"/>
<evidence type="ECO:0000305" key="5"/>
<name>HN_NDVC</name>
<organism>
    <name type="scientific">Newcastle disease virus (strain Chi/85)</name>
    <name type="common">NDV</name>
    <dbReference type="NCBI Taxonomy" id="11179"/>
    <lineage>
        <taxon>Viruses</taxon>
        <taxon>Riboviria</taxon>
        <taxon>Orthornavirae</taxon>
        <taxon>Negarnaviricota</taxon>
        <taxon>Haploviricotina</taxon>
        <taxon>Monjiviricetes</taxon>
        <taxon>Mononegavirales</taxon>
        <taxon>Paramyxoviridae</taxon>
        <taxon>Avulavirinae</taxon>
        <taxon>Orthoavulavirus</taxon>
        <taxon>Orthoavulavirus javaense</taxon>
        <taxon>Avian paramyxovirus 1</taxon>
    </lineage>
</organism>
<protein>
    <recommendedName>
        <fullName>Hemagglutinin-neuraminidase</fullName>
        <ecNumber evidence="3">3.2.1.18</ecNumber>
    </recommendedName>
</protein>
<reference key="1">
    <citation type="journal article" date="1989" name="Virology">
        <title>Newcastle disease virus evolution. I. Multiple lineages defined by sequence variability of the hemagglutinin-neuraminidase gene.</title>
        <authorList>
            <person name="Sakaguchi T."/>
            <person name="Toyoda T."/>
            <person name="Gotoh B."/>
            <person name="Inocencio N.M."/>
            <person name="Kuma K."/>
            <person name="Miyata T."/>
            <person name="Nagai Y."/>
        </authorList>
    </citation>
    <scope>NUCLEOTIDE SEQUENCE [GENOMIC RNA]</scope>
</reference>